<protein>
    <recommendedName>
        <fullName>Fanconi anemia group M protein</fullName>
        <shortName>Protein FACM</shortName>
        <ecNumber evidence="1">3.6.4.13</ecNumber>
    </recommendedName>
    <alternativeName>
        <fullName>ATP-dependent RNA helicase FANCM</fullName>
    </alternativeName>
    <alternativeName>
        <fullName>Fanconi anemia-associated polypeptide of 250 kDa</fullName>
        <shortName>FAAP250</shortName>
    </alternativeName>
    <alternativeName>
        <fullName evidence="7">Protein Hef ortholog</fullName>
    </alternativeName>
</protein>
<reference key="1">
    <citation type="journal article" date="2004" name="Nature">
        <title>Sequence and comparative analysis of the chicken genome provide unique perspectives on vertebrate evolution.</title>
        <authorList>
            <person name="Hillier L.W."/>
            <person name="Miller W."/>
            <person name="Birney E."/>
            <person name="Warren W."/>
            <person name="Hardison R.C."/>
            <person name="Ponting C.P."/>
            <person name="Bork P."/>
            <person name="Burt D.W."/>
            <person name="Groenen M.A.M."/>
            <person name="Delany M.E."/>
            <person name="Dodgson J.B."/>
            <person name="Chinwalla A.T."/>
            <person name="Cliften P.F."/>
            <person name="Clifton S.W."/>
            <person name="Delehaunty K.D."/>
            <person name="Fronick C."/>
            <person name="Fulton R.S."/>
            <person name="Graves T.A."/>
            <person name="Kremitzki C."/>
            <person name="Layman D."/>
            <person name="Magrini V."/>
            <person name="McPherson J.D."/>
            <person name="Miner T.L."/>
            <person name="Minx P."/>
            <person name="Nash W.E."/>
            <person name="Nhan M.N."/>
            <person name="Nelson J.O."/>
            <person name="Oddy L.G."/>
            <person name="Pohl C.S."/>
            <person name="Randall-Maher J."/>
            <person name="Smith S.M."/>
            <person name="Wallis J.W."/>
            <person name="Yang S.-P."/>
            <person name="Romanov M.N."/>
            <person name="Rondelli C.M."/>
            <person name="Paton B."/>
            <person name="Smith J."/>
            <person name="Morrice D."/>
            <person name="Daniels L."/>
            <person name="Tempest H.G."/>
            <person name="Robertson L."/>
            <person name="Masabanda J.S."/>
            <person name="Griffin D.K."/>
            <person name="Vignal A."/>
            <person name="Fillon V."/>
            <person name="Jacobbson L."/>
            <person name="Kerje S."/>
            <person name="Andersson L."/>
            <person name="Crooijmans R.P."/>
            <person name="Aerts J."/>
            <person name="van der Poel J.J."/>
            <person name="Ellegren H."/>
            <person name="Caldwell R.B."/>
            <person name="Hubbard S.J."/>
            <person name="Grafham D.V."/>
            <person name="Kierzek A.M."/>
            <person name="McLaren S.R."/>
            <person name="Overton I.M."/>
            <person name="Arakawa H."/>
            <person name="Beattie K.J."/>
            <person name="Bezzubov Y."/>
            <person name="Boardman P.E."/>
            <person name="Bonfield J.K."/>
            <person name="Croning M.D.R."/>
            <person name="Davies R.M."/>
            <person name="Francis M.D."/>
            <person name="Humphray S.J."/>
            <person name="Scott C.E."/>
            <person name="Taylor R.G."/>
            <person name="Tickle C."/>
            <person name="Brown W.R.A."/>
            <person name="Rogers J."/>
            <person name="Buerstedde J.-M."/>
            <person name="Wilson S.A."/>
            <person name="Stubbs L."/>
            <person name="Ovcharenko I."/>
            <person name="Gordon L."/>
            <person name="Lucas S."/>
            <person name="Miller M.M."/>
            <person name="Inoko H."/>
            <person name="Shiina T."/>
            <person name="Kaufman J."/>
            <person name="Salomonsen J."/>
            <person name="Skjoedt K."/>
            <person name="Wong G.K.-S."/>
            <person name="Wang J."/>
            <person name="Liu B."/>
            <person name="Wang J."/>
            <person name="Yu J."/>
            <person name="Yang H."/>
            <person name="Nefedov M."/>
            <person name="Koriabine M."/>
            <person name="Dejong P.J."/>
            <person name="Goodstadt L."/>
            <person name="Webber C."/>
            <person name="Dickens N.J."/>
            <person name="Letunic I."/>
            <person name="Suyama M."/>
            <person name="Torrents D."/>
            <person name="von Mering C."/>
            <person name="Zdobnov E.M."/>
            <person name="Makova K."/>
            <person name="Nekrutenko A."/>
            <person name="Elnitski L."/>
            <person name="Eswara P."/>
            <person name="King D.C."/>
            <person name="Yang S.-P."/>
            <person name="Tyekucheva S."/>
            <person name="Radakrishnan A."/>
            <person name="Harris R.S."/>
            <person name="Chiaromonte F."/>
            <person name="Taylor J."/>
            <person name="He J."/>
            <person name="Rijnkels M."/>
            <person name="Griffiths-Jones S."/>
            <person name="Ureta-Vidal A."/>
            <person name="Hoffman M.M."/>
            <person name="Severin J."/>
            <person name="Searle S.M.J."/>
            <person name="Law A.S."/>
            <person name="Speed D."/>
            <person name="Waddington D."/>
            <person name="Cheng Z."/>
            <person name="Tuzun E."/>
            <person name="Eichler E."/>
            <person name="Bao Z."/>
            <person name="Flicek P."/>
            <person name="Shteynberg D.D."/>
            <person name="Brent M.R."/>
            <person name="Bye J.M."/>
            <person name="Huckle E.J."/>
            <person name="Chatterji S."/>
            <person name="Dewey C."/>
            <person name="Pachter L."/>
            <person name="Kouranov A."/>
            <person name="Mourelatos Z."/>
            <person name="Hatzigeorgiou A.G."/>
            <person name="Paterson A.H."/>
            <person name="Ivarie R."/>
            <person name="Brandstrom M."/>
            <person name="Axelsson E."/>
            <person name="Backstrom N."/>
            <person name="Berlin S."/>
            <person name="Webster M.T."/>
            <person name="Pourquie O."/>
            <person name="Reymond A."/>
            <person name="Ucla C."/>
            <person name="Antonarakis S.E."/>
            <person name="Long M."/>
            <person name="Emerson J.J."/>
            <person name="Betran E."/>
            <person name="Dupanloup I."/>
            <person name="Kaessmann H."/>
            <person name="Hinrichs A.S."/>
            <person name="Bejerano G."/>
            <person name="Furey T.S."/>
            <person name="Harte R.A."/>
            <person name="Raney B."/>
            <person name="Siepel A."/>
            <person name="Kent W.J."/>
            <person name="Haussler D."/>
            <person name="Eyras E."/>
            <person name="Castelo R."/>
            <person name="Abril J.F."/>
            <person name="Castellano S."/>
            <person name="Camara F."/>
            <person name="Parra G."/>
            <person name="Guigo R."/>
            <person name="Bourque G."/>
            <person name="Tesler G."/>
            <person name="Pevzner P.A."/>
            <person name="Smit A."/>
            <person name="Fulton L.A."/>
            <person name="Mardis E.R."/>
            <person name="Wilson R.K."/>
        </authorList>
    </citation>
    <scope>NUCLEOTIDE SEQUENCE [LARGE SCALE GENOMIC DNA]</scope>
    <source>
        <strain>Red jungle fowl</strain>
    </source>
</reference>
<reference key="2">
    <citation type="journal article" date="2005" name="Nat. Struct. Mol. Biol.">
        <title>The vertebrate Hef ortholog is a component of the Fanconi anemia tumor-suppressor pathway.</title>
        <authorList>
            <person name="Mosedale G."/>
            <person name="Niedzwiedz W."/>
            <person name="Alpi A."/>
            <person name="Perrina F."/>
            <person name="Pereira-Leal J.B."/>
            <person name="Johnson M."/>
            <person name="Langevin F."/>
            <person name="Pace P."/>
            <person name="Patel K.J."/>
        </authorList>
    </citation>
    <scope>FUNCTION</scope>
    <scope>IDENTIFICATION IN THE FA COMPLEX</scope>
    <scope>MUTAGENESIS OF ASP-207</scope>
</reference>
<reference key="3">
    <citation type="journal article" date="2009" name="Nucleic Acids Res.">
        <title>The Walker B motif in avian FANCM is required to limit sister chromatid exchanges but is dispensable for DNA crosslink repair.</title>
        <authorList>
            <person name="Rosado I.V."/>
            <person name="Niedzwiedz W."/>
            <person name="Alpi A.F."/>
            <person name="Patel K.J."/>
        </authorList>
    </citation>
    <scope>FUNCTION</scope>
    <scope>SUBCELLULAR LOCATION</scope>
    <scope>PHOSPHORYLATION</scope>
</reference>
<comment type="function">
    <text evidence="1 5 6">DNA-dependent ATPase component of the Fanconi anemia (FA) core complex (By similarity). Required for the normal activation of the FA pathway, leading to monoubiquitination of the FANCI-FANCD2 complex in response to DNA damage, cellular resistance to DNA cross-linking drugs, and prevention of chromosomal breakage (PubMed:16116434, PubMed:19465393). In complex with CENPS and CENPX, binds double-stranded DNA (dsDNA), fork-structured DNA (fsDNA) and Holliday junction substrates (By similarity). Its ATP-dependent DNA branch migration activity can process branched DNA structures such as a movable replication fork (By similarity). This activity is strongly stimulated in the presence of CENPS and CENPX (By similarity). In complex with FAAP24, efficiently binds to single-strand DNA (ssDNA), splayed-arm DNA, and 3'-flap substrates (By similarity). In vitro, on its own, strongly binds ssDNA oligomers and weakly fsDNA, but does not bind to dsDNA (By similarity).</text>
</comment>
<comment type="catalytic activity">
    <reaction evidence="1">
        <text>ATP + H2O = ADP + phosphate + H(+)</text>
        <dbReference type="Rhea" id="RHEA:13065"/>
        <dbReference type="ChEBI" id="CHEBI:15377"/>
        <dbReference type="ChEBI" id="CHEBI:15378"/>
        <dbReference type="ChEBI" id="CHEBI:30616"/>
        <dbReference type="ChEBI" id="CHEBI:43474"/>
        <dbReference type="ChEBI" id="CHEBI:456216"/>
        <dbReference type="EC" id="3.6.4.13"/>
    </reaction>
</comment>
<comment type="subunit">
    <text evidence="1">Component of the Fanconi anemia (FA) core complex. The FA core complex associates with Bloom syndrome (BLM) complex. This supercomplex between FA and BLM complexes has been called BRAFT.</text>
</comment>
<comment type="subcellular location">
    <subcellularLocation>
        <location evidence="6">Nucleus</location>
    </subcellularLocation>
</comment>
<comment type="PTM">
    <text evidence="6">Phosphorylated; hyperphosphorylated in response to genotoxic stress.</text>
</comment>
<comment type="similarity">
    <text evidence="8">Belongs to the DEAD box helicase family. DEAH subfamily. FANCM sub-subfamily.</text>
</comment>
<gene>
    <name type="primary">FANCM</name>
</gene>
<keyword id="KW-0002">3D-structure</keyword>
<keyword id="KW-0067">ATP-binding</keyword>
<keyword id="KW-0227">DNA damage</keyword>
<keyword id="KW-0234">DNA repair</keyword>
<keyword id="KW-0238">DNA-binding</keyword>
<keyword id="KW-0347">Helicase</keyword>
<keyword id="KW-0378">Hydrolase</keyword>
<keyword id="KW-0547">Nucleotide-binding</keyword>
<keyword id="KW-0539">Nucleus</keyword>
<keyword id="KW-0597">Phosphoprotein</keyword>
<keyword id="KW-1185">Reference proteome</keyword>
<dbReference type="EC" id="3.6.4.13" evidence="1"/>
<dbReference type="EMBL" id="AADN04000285">
    <property type="status" value="NOT_ANNOTATED_CDS"/>
    <property type="molecule type" value="Genomic_DNA"/>
</dbReference>
<dbReference type="RefSeq" id="XP_015132266.1">
    <property type="nucleotide sequence ID" value="XM_015276780.1"/>
</dbReference>
<dbReference type="PDB" id="7DA2">
    <property type="method" value="X-ray"/>
    <property type="resolution" value="2.79 A"/>
    <property type="chains" value="E=660-804"/>
</dbReference>
<dbReference type="PDBsum" id="7DA2"/>
<dbReference type="SMR" id="A0A1D5PRR9"/>
<dbReference type="FunCoup" id="A0A1D5PRR9">
    <property type="interactions" value="1547"/>
</dbReference>
<dbReference type="STRING" id="9031.ENSGALP00000070244"/>
<dbReference type="GlyGen" id="A0A1D5PRR9">
    <property type="glycosylation" value="2 sites"/>
</dbReference>
<dbReference type="PaxDb" id="9031-ENSGALP00000020332"/>
<dbReference type="Ensembl" id="ENSGALT00000057113">
    <property type="protein sequence ID" value="ENSGALP00000055597"/>
    <property type="gene ID" value="ENSGALG00000031182"/>
</dbReference>
<dbReference type="KEGG" id="gga:100857997"/>
<dbReference type="VEuPathDB" id="HostDB:geneid_100857997"/>
<dbReference type="eggNOG" id="KOG0354">
    <property type="taxonomic scope" value="Eukaryota"/>
</dbReference>
<dbReference type="eggNOG" id="KOG0442">
    <property type="taxonomic scope" value="Eukaryota"/>
</dbReference>
<dbReference type="InParanoid" id="A0A1D5PRR9"/>
<dbReference type="OrthoDB" id="6513042at2759"/>
<dbReference type="PRO" id="PR:A0A1D5PRR9"/>
<dbReference type="Proteomes" id="UP000000539">
    <property type="component" value="Unassembled WGS sequence"/>
</dbReference>
<dbReference type="GO" id="GO:0005737">
    <property type="term" value="C:cytoplasm"/>
    <property type="evidence" value="ECO:0000318"/>
    <property type="project" value="GO_Central"/>
</dbReference>
<dbReference type="GO" id="GO:0005634">
    <property type="term" value="C:nucleus"/>
    <property type="evidence" value="ECO:0007669"/>
    <property type="project" value="UniProtKB-SubCell"/>
</dbReference>
<dbReference type="GO" id="GO:0043138">
    <property type="term" value="F:3'-5' DNA helicase activity"/>
    <property type="evidence" value="ECO:0007669"/>
    <property type="project" value="InterPro"/>
</dbReference>
<dbReference type="GO" id="GO:0005524">
    <property type="term" value="F:ATP binding"/>
    <property type="evidence" value="ECO:0007669"/>
    <property type="project" value="UniProtKB-KW"/>
</dbReference>
<dbReference type="GO" id="GO:0016887">
    <property type="term" value="F:ATP hydrolysis activity"/>
    <property type="evidence" value="ECO:0007669"/>
    <property type="project" value="RHEA"/>
</dbReference>
<dbReference type="GO" id="GO:0003677">
    <property type="term" value="F:DNA binding"/>
    <property type="evidence" value="ECO:0007669"/>
    <property type="project" value="UniProtKB-KW"/>
</dbReference>
<dbReference type="GO" id="GO:0004518">
    <property type="term" value="F:nuclease activity"/>
    <property type="evidence" value="ECO:0007669"/>
    <property type="project" value="InterPro"/>
</dbReference>
<dbReference type="GO" id="GO:0003724">
    <property type="term" value="F:RNA helicase activity"/>
    <property type="evidence" value="ECO:0007669"/>
    <property type="project" value="UniProtKB-EC"/>
</dbReference>
<dbReference type="GO" id="GO:0006281">
    <property type="term" value="P:DNA repair"/>
    <property type="evidence" value="ECO:0007669"/>
    <property type="project" value="UniProtKB-KW"/>
</dbReference>
<dbReference type="CDD" id="cd18033">
    <property type="entry name" value="DEXDc_FANCM"/>
    <property type="match status" value="1"/>
</dbReference>
<dbReference type="CDD" id="cd12091">
    <property type="entry name" value="FANCM_ID"/>
    <property type="match status" value="1"/>
</dbReference>
<dbReference type="CDD" id="cd18801">
    <property type="entry name" value="SF2_C_FANCM_Hef"/>
    <property type="match status" value="1"/>
</dbReference>
<dbReference type="CDD" id="cd20077">
    <property type="entry name" value="XPF_nuclease_FANCM"/>
    <property type="match status" value="1"/>
</dbReference>
<dbReference type="FunFam" id="1.20.1320.20:FF:000001">
    <property type="entry name" value="Fanconi anemia, complementation group M"/>
    <property type="match status" value="1"/>
</dbReference>
<dbReference type="FunFam" id="3.40.50.300:FF:000861">
    <property type="entry name" value="Fanconi anemia, complementation group M"/>
    <property type="match status" value="1"/>
</dbReference>
<dbReference type="Gene3D" id="3.40.50.10130">
    <property type="match status" value="1"/>
</dbReference>
<dbReference type="Gene3D" id="1.10.150.20">
    <property type="entry name" value="5' to 3' exonuclease, C-terminal subdomain"/>
    <property type="match status" value="1"/>
</dbReference>
<dbReference type="Gene3D" id="1.20.1320.20">
    <property type="entry name" value="hef helicase domain"/>
    <property type="match status" value="1"/>
</dbReference>
<dbReference type="Gene3D" id="3.40.50.300">
    <property type="entry name" value="P-loop containing nucleotide triphosphate hydrolases"/>
    <property type="match status" value="2"/>
</dbReference>
<dbReference type="InterPro" id="IPR011545">
    <property type="entry name" value="DEAD/DEAH_box_helicase_dom"/>
</dbReference>
<dbReference type="InterPro" id="IPR006166">
    <property type="entry name" value="ERCC4_domain"/>
</dbReference>
<dbReference type="InterPro" id="IPR031879">
    <property type="entry name" value="FANCM-MHF-bd"/>
</dbReference>
<dbReference type="InterPro" id="IPR039686">
    <property type="entry name" value="FANCM/Mph1-like_ID"/>
</dbReference>
<dbReference type="InterPro" id="IPR044749">
    <property type="entry name" value="FANCM_DEXDc"/>
</dbReference>
<dbReference type="InterPro" id="IPR014001">
    <property type="entry name" value="Helicase_ATP-bd"/>
</dbReference>
<dbReference type="InterPro" id="IPR001650">
    <property type="entry name" value="Helicase_C-like"/>
</dbReference>
<dbReference type="InterPro" id="IPR027417">
    <property type="entry name" value="P-loop_NTPase"/>
</dbReference>
<dbReference type="InterPro" id="IPR011335">
    <property type="entry name" value="Restrct_endonuc-II-like"/>
</dbReference>
<dbReference type="InterPro" id="IPR010994">
    <property type="entry name" value="RuvA_2-like"/>
</dbReference>
<dbReference type="InterPro" id="IPR047418">
    <property type="entry name" value="XPF_nuclease_FANCM"/>
</dbReference>
<dbReference type="PANTHER" id="PTHR14025">
    <property type="entry name" value="FANCONI ANEMIA GROUP M FANCM FAMILY MEMBER"/>
    <property type="match status" value="1"/>
</dbReference>
<dbReference type="PANTHER" id="PTHR14025:SF20">
    <property type="entry name" value="FANCONI ANEMIA GROUP M PROTEIN"/>
    <property type="match status" value="1"/>
</dbReference>
<dbReference type="Pfam" id="PF00270">
    <property type="entry name" value="DEAD"/>
    <property type="match status" value="1"/>
</dbReference>
<dbReference type="Pfam" id="PF02732">
    <property type="entry name" value="ERCC4"/>
    <property type="match status" value="1"/>
</dbReference>
<dbReference type="Pfam" id="PF16783">
    <property type="entry name" value="FANCM-MHF_bd"/>
    <property type="match status" value="1"/>
</dbReference>
<dbReference type="Pfam" id="PF00271">
    <property type="entry name" value="Helicase_C"/>
    <property type="match status" value="1"/>
</dbReference>
<dbReference type="SMART" id="SM00487">
    <property type="entry name" value="DEXDc"/>
    <property type="match status" value="1"/>
</dbReference>
<dbReference type="SMART" id="SM00891">
    <property type="entry name" value="ERCC4"/>
    <property type="match status" value="1"/>
</dbReference>
<dbReference type="SMART" id="SM00490">
    <property type="entry name" value="HELICc"/>
    <property type="match status" value="1"/>
</dbReference>
<dbReference type="SUPFAM" id="SSF52540">
    <property type="entry name" value="P-loop containing nucleoside triphosphate hydrolases"/>
    <property type="match status" value="1"/>
</dbReference>
<dbReference type="SUPFAM" id="SSF52980">
    <property type="entry name" value="Restriction endonuclease-like"/>
    <property type="match status" value="1"/>
</dbReference>
<dbReference type="SUPFAM" id="SSF47781">
    <property type="entry name" value="RuvA domain 2-like"/>
    <property type="match status" value="1"/>
</dbReference>
<dbReference type="PROSITE" id="PS51192">
    <property type="entry name" value="HELICASE_ATP_BIND_1"/>
    <property type="match status" value="1"/>
</dbReference>
<dbReference type="PROSITE" id="PS51194">
    <property type="entry name" value="HELICASE_CTER"/>
    <property type="match status" value="1"/>
</dbReference>
<evidence type="ECO:0000250" key="1">
    <source>
        <dbReference type="UniProtKB" id="Q8IYD8"/>
    </source>
</evidence>
<evidence type="ECO:0000255" key="2">
    <source>
        <dbReference type="PROSITE-ProRule" id="PRU00541"/>
    </source>
</evidence>
<evidence type="ECO:0000255" key="3">
    <source>
        <dbReference type="PROSITE-ProRule" id="PRU00542"/>
    </source>
</evidence>
<evidence type="ECO:0000256" key="4">
    <source>
        <dbReference type="SAM" id="MobiDB-lite"/>
    </source>
</evidence>
<evidence type="ECO:0000269" key="5">
    <source>
    </source>
</evidence>
<evidence type="ECO:0000269" key="6">
    <source>
    </source>
</evidence>
<evidence type="ECO:0000303" key="7">
    <source>
    </source>
</evidence>
<evidence type="ECO:0000305" key="8"/>
<evidence type="ECO:0007829" key="9">
    <source>
        <dbReference type="PDB" id="7DA2"/>
    </source>
</evidence>
<sequence>MSGGRQRTLPEAWRRAAGPALQAGRDADGNDDDDDELLAAAAAELDPDPNPNVDPNPGPGPEAAAGGFCAAAGALWIYPTNRPERPYQLRMARAALFANTLLCLPTGLGKTFVAAVVMYNFYRWFPSGKVLFLAPTKALVAQQMEACAQLMGIPGRDMAEMTGGTQALSRRELWASRRVFFLTPQIMVNDLSRGTCPAVEVKCLVVDEAHKALGNHAYCQVVKELSRYTTQFRVLALTATPGSDTKAVQQVVSNLLIAQIELCSEDSPEIQPYSHERQVEKIVVPLGEELGGIQRAYIHVLETFAGRLIKLGVLARRDVPSLTKYQIILARDQYRKNPSPQNVGMQPGIIEGDFALCISLYHGYELLQQMGVRSLFIYLCGIMDGSKGLTRTKNELGRNEDFMRLYQQLTDMFSDTCQTSANGNLHKSRTVSENKKEFIYSHPKLKKLEEIVIEHFKSRKMGCSDQTTSGGTCVDTRVMIFSSFRDSVQEIAEMLSRFSPVVRVMTFVGHSTGKSTKGFTQKEQLEVVKRFREGGYNTLVSTCVGEEGLDIGEVDLIICFDAQKSPIRLVQRMGRTGRQRQGRVVVILAEGREERTYNQSQSNRRSIQKAISGNKMLHFYQHSPRMIPEGINPELHRMFITAEKYKPNDSGRLPKGRPSSLHHKSALFSCVTDPKEMHCHENWSLSPEEFEIWDRLYRLKENDGVKEPILPHTRFETLENLDKTSKPEEEAAHKLSLSEWSIWQSRPFPTSMVDHSDRCYHFISVMELIEVMRQEQGDCSYELELQPHLRIEDIHVRRNKGHLSTTSSAFAQKTHSSKRDMARTKRPFVPDVNDNEREFFSIFKTTNTKTPRTAPGLDLEEPELPTDTNGSEPCSARRLTLVASTDQGSPKEEEIEKVTFDLNEFNDLCDDGESTVAHESAAVKDLRLLDKHCSSVGLNHTDLGYSSFTAEKSPASSDLFYLPESHVDSFVLVSSSAELAGLEGAFSCVKGLLAHSPPPVSKLEGIEELLRHEETLCPLPKVSCRSYSGQLPHGDFPSSLAVDQSLLPAESPELEVTIGLSAAVNTCVSKPASTPTAAGGAEERPPGGGSFHSLLGKEGFTANHTDNPPNKHFVQGDEEDSEMKRDVTIDGEKSIHLFEDEHTYKVNDEMPSVDVEPLLRLGSGGHTARPSAGPASQQPPSGDSPRGDTACGEGAARGEMAPGGAWGRGSAAEQALHNSELCDYSQELFSVNFDLGFSIEECEEEIFEGDTDAMNTPKLNSASRSRADVQLTANRKSLNDGCRVQTPPKWDCKGLKGRNISTPLPLQSGHVRDTAVPGGTAGGRTGRGSPGASPPSPATPTGRRVSSAEATRRIRKKVFSTVREETPEVCPTDKVNPNSQRNSFGSSASDALHTTGGRTENLEGTNLHTSRVFPAEGTSSESEEEIVFQRKNRRNNVLRSPDVGSDSDFGSPVCAVRKRRHPLTVSDVSSDDGVDFHKNPNRGTRGCSAAGSKAQLRGVKRQKVRSKVTCKNAARQFLDEEAELSQQDESCVSSDETEDTDKELSSSLAQFLNDDAEVTQVLNDSEMRGVYLKSVRSPALGSRYRMVHREFNSTEIFSQIPEQDEAYAEDSFCVAEGDEETCNKSESSEEEEVCVNFDLLNNESFGGGGGRYLTRRRKKLHGANMEQNCSAPVQKKPSRIIVLSDSSGEETNVSNEKGTAAHCSRAGRENAELLTSMPSVSSVPHKKSAGDVSAHQSAESKSGMLLGLKASVSEVLDFHPGPRSGSGKEALQAAAQHLQLESSVKNSAGNAPGATKASPALLDGDTALCVLVDSREISSGADVISSLKAVHGLKVQVCSLGSGDYVVSNRMAVERKFQSELLSSVNRTKVTQRLQRLQGMFERVCVIVEKDRTRPGETSRFSQRTQHYDATLAALLQAGIRVLFSSCQEETAVLLKELALLEQRKNAAICVPTEVEGHKQEMLNFYLSLPNISYLAALNMCHHFSSVRTMVNSSPSDIAAGARVSLQRAEETYRYLRYGFDTQMLPESLCAKGKSNTATRS</sequence>
<name>FANCM_CHICK</name>
<feature type="chain" id="PRO_0000439248" description="Fanconi anemia group M protein">
    <location>
        <begin position="1"/>
        <end position="2041"/>
    </location>
</feature>
<feature type="domain" description="Helicase ATP-binding" evidence="2">
    <location>
        <begin position="91"/>
        <end position="259"/>
    </location>
</feature>
<feature type="domain" description="Helicase C-terminal" evidence="3">
    <location>
        <begin position="447"/>
        <end position="631"/>
    </location>
</feature>
<feature type="region of interest" description="Disordered" evidence="4">
    <location>
        <begin position="1"/>
        <end position="64"/>
    </location>
</feature>
<feature type="region of interest" description="Disordered" evidence="4">
    <location>
        <begin position="802"/>
        <end position="822"/>
    </location>
</feature>
<feature type="region of interest" description="Disordered" evidence="4">
    <location>
        <begin position="848"/>
        <end position="874"/>
    </location>
</feature>
<feature type="region of interest" description="Disordered" evidence="4">
    <location>
        <begin position="1070"/>
        <end position="1124"/>
    </location>
</feature>
<feature type="region of interest" description="Disordered" evidence="4">
    <location>
        <begin position="1158"/>
        <end position="1208"/>
    </location>
</feature>
<feature type="region of interest" description="Disordered" evidence="4">
    <location>
        <begin position="1301"/>
        <end position="1403"/>
    </location>
</feature>
<feature type="region of interest" description="Disordered" evidence="4">
    <location>
        <begin position="1465"/>
        <end position="1491"/>
    </location>
</feature>
<feature type="region of interest" description="Disordered" evidence="4">
    <location>
        <begin position="1685"/>
        <end position="1740"/>
    </location>
</feature>
<feature type="short sequence motif" description="DEAH box" evidence="2">
    <location>
        <begin position="207"/>
        <end position="210"/>
    </location>
</feature>
<feature type="compositionally biased region" description="Pro residues" evidence="4">
    <location>
        <begin position="48"/>
        <end position="60"/>
    </location>
</feature>
<feature type="compositionally biased region" description="Polar residues" evidence="4">
    <location>
        <begin position="802"/>
        <end position="814"/>
    </location>
</feature>
<feature type="compositionally biased region" description="Low complexity" evidence="4">
    <location>
        <begin position="1170"/>
        <end position="1181"/>
    </location>
</feature>
<feature type="compositionally biased region" description="Gly residues" evidence="4">
    <location>
        <begin position="1319"/>
        <end position="1329"/>
    </location>
</feature>
<feature type="compositionally biased region" description="Polar residues" evidence="4">
    <location>
        <begin position="1375"/>
        <end position="1389"/>
    </location>
</feature>
<feature type="compositionally biased region" description="Polar residues" evidence="4">
    <location>
        <begin position="1685"/>
        <end position="1697"/>
    </location>
</feature>
<feature type="binding site" evidence="2">
    <location>
        <begin position="104"/>
        <end position="111"/>
    </location>
    <ligand>
        <name>ATP</name>
        <dbReference type="ChEBI" id="CHEBI:30616"/>
    </ligand>
</feature>
<feature type="mutagenesis site" description="Increased sister chromatid exchanges. No effect on FANCD2 monoubiquitination, nor on cisplatin sensitivity." evidence="5">
    <original>D</original>
    <variation>A</variation>
    <location>
        <position position="207"/>
    </location>
</feature>
<feature type="helix" evidence="9">
    <location>
        <begin position="675"/>
        <end position="678"/>
    </location>
</feature>
<feature type="strand" evidence="9">
    <location>
        <begin position="681"/>
        <end position="684"/>
    </location>
</feature>
<feature type="helix" evidence="9">
    <location>
        <begin position="687"/>
        <end position="696"/>
    </location>
</feature>
<feature type="strand" evidence="9">
    <location>
        <begin position="707"/>
        <end position="709"/>
    </location>
</feature>
<feature type="strand" evidence="9">
    <location>
        <begin position="716"/>
        <end position="718"/>
    </location>
</feature>
<feature type="turn" evidence="9">
    <location>
        <begin position="727"/>
        <end position="730"/>
    </location>
</feature>
<feature type="strand" evidence="9">
    <location>
        <begin position="731"/>
        <end position="734"/>
    </location>
</feature>
<feature type="helix" evidence="9">
    <location>
        <begin position="741"/>
        <end position="745"/>
    </location>
</feature>
<feature type="strand" evidence="9">
    <location>
        <begin position="751"/>
        <end position="753"/>
    </location>
</feature>
<feature type="helix" evidence="9">
    <location>
        <begin position="757"/>
        <end position="773"/>
    </location>
</feature>
<feature type="helix" evidence="9">
    <location>
        <begin position="776"/>
        <end position="785"/>
    </location>
</feature>
<feature type="helix" evidence="9">
    <location>
        <begin position="786"/>
        <end position="788"/>
    </location>
</feature>
<feature type="helix" evidence="9">
    <location>
        <begin position="791"/>
        <end position="793"/>
    </location>
</feature>
<organism>
    <name type="scientific">Gallus gallus</name>
    <name type="common">Chicken</name>
    <dbReference type="NCBI Taxonomy" id="9031"/>
    <lineage>
        <taxon>Eukaryota</taxon>
        <taxon>Metazoa</taxon>
        <taxon>Chordata</taxon>
        <taxon>Craniata</taxon>
        <taxon>Vertebrata</taxon>
        <taxon>Euteleostomi</taxon>
        <taxon>Archelosauria</taxon>
        <taxon>Archosauria</taxon>
        <taxon>Dinosauria</taxon>
        <taxon>Saurischia</taxon>
        <taxon>Theropoda</taxon>
        <taxon>Coelurosauria</taxon>
        <taxon>Aves</taxon>
        <taxon>Neognathae</taxon>
        <taxon>Galloanserae</taxon>
        <taxon>Galliformes</taxon>
        <taxon>Phasianidae</taxon>
        <taxon>Phasianinae</taxon>
        <taxon>Gallus</taxon>
    </lineage>
</organism>
<accession>A0A1D5PRR9</accession>
<proteinExistence type="evidence at protein level"/>